<sequence length="382" mass="43370">MTEHAIKYRLIKKEKHTGARLGEIITPHGTFPTPMFMPVGTQATVKTMSPEELKTLGSGIILSNTYHLWLRPGDELVAEAGGLHKFMNWDQPILTDSGGFQVYSLVQNKKNITEEGVKFKSHLDGRELFLNPEKAISIQNNLGSDIMMSFDECPPFYQPYDYVKASVERTSRWAERGLNAHRRPNDQGLFGIVQGAGFEDLRRQSASDLTSMDFAGYSIGGLAVGESHKEMNAVLDFTTPMLPEDKPRYLMGVGAPDSLIDGVIRGVDMFDCVLPTRIARNGTLMTHFGRVNIRNAKYEYDFTPLDPMCDCYTCTNYTRAYLRHLIKADETFGLRLCSYHNLHFLVNLMKDVRQAIMDDNLLEFREDFCERYGYNQPNAKDF</sequence>
<organism>
    <name type="scientific">Lactococcus lactis subsp. cremoris (strain MG1363)</name>
    <dbReference type="NCBI Taxonomy" id="416870"/>
    <lineage>
        <taxon>Bacteria</taxon>
        <taxon>Bacillati</taxon>
        <taxon>Bacillota</taxon>
        <taxon>Bacilli</taxon>
        <taxon>Lactobacillales</taxon>
        <taxon>Streptococcaceae</taxon>
        <taxon>Lactococcus</taxon>
        <taxon>Lactococcus cremoris subsp. cremoris</taxon>
    </lineage>
</organism>
<name>TGT_LACLM</name>
<gene>
    <name evidence="1" type="primary">tgt</name>
    <name type="ordered locus">llmg_0164</name>
</gene>
<protein>
    <recommendedName>
        <fullName evidence="1">Queuine tRNA-ribosyltransferase</fullName>
        <ecNumber evidence="1">2.4.2.29</ecNumber>
    </recommendedName>
    <alternativeName>
        <fullName evidence="1">Guanine insertion enzyme</fullName>
    </alternativeName>
    <alternativeName>
        <fullName evidence="1">tRNA-guanine transglycosylase</fullName>
    </alternativeName>
</protein>
<reference key="1">
    <citation type="journal article" date="2007" name="J. Bacteriol.">
        <title>The complete genome sequence of the lactic acid bacterial paradigm Lactococcus lactis subsp. cremoris MG1363.</title>
        <authorList>
            <person name="Wegmann U."/>
            <person name="O'Connell-Motherway M."/>
            <person name="Zomer A."/>
            <person name="Buist G."/>
            <person name="Shearman C."/>
            <person name="Canchaya C."/>
            <person name="Ventura M."/>
            <person name="Goesmann A."/>
            <person name="Gasson M.J."/>
            <person name="Kuipers O.P."/>
            <person name="van Sinderen D."/>
            <person name="Kok J."/>
        </authorList>
    </citation>
    <scope>NUCLEOTIDE SEQUENCE [LARGE SCALE GENOMIC DNA]</scope>
    <source>
        <strain>MG1363</strain>
    </source>
</reference>
<comment type="function">
    <text evidence="1">Catalyzes the base-exchange of a guanine (G) residue with the queuine precursor 7-aminomethyl-7-deazaguanine (PreQ1) at position 34 (anticodon wobble position) in tRNAs with GU(N) anticodons (tRNA-Asp, -Asn, -His and -Tyr). Catalysis occurs through a double-displacement mechanism. The nucleophile active site attacks the C1' of nucleotide 34 to detach the guanine base from the RNA, forming a covalent enzyme-RNA intermediate. The proton acceptor active site deprotonates the incoming PreQ1, allowing a nucleophilic attack on the C1' of the ribose to form the product. After dissociation, two additional enzymatic reactions on the tRNA convert PreQ1 to queuine (Q), resulting in the hypermodified nucleoside queuosine (7-(((4,5-cis-dihydroxy-2-cyclopenten-1-yl)amino)methyl)-7-deazaguanosine).</text>
</comment>
<comment type="catalytic activity">
    <reaction evidence="1">
        <text>7-aminomethyl-7-carbaguanine + guanosine(34) in tRNA = 7-aminomethyl-7-carbaguanosine(34) in tRNA + guanine</text>
        <dbReference type="Rhea" id="RHEA:24104"/>
        <dbReference type="Rhea" id="RHEA-COMP:10341"/>
        <dbReference type="Rhea" id="RHEA-COMP:10342"/>
        <dbReference type="ChEBI" id="CHEBI:16235"/>
        <dbReference type="ChEBI" id="CHEBI:58703"/>
        <dbReference type="ChEBI" id="CHEBI:74269"/>
        <dbReference type="ChEBI" id="CHEBI:82833"/>
        <dbReference type="EC" id="2.4.2.29"/>
    </reaction>
</comment>
<comment type="cofactor">
    <cofactor evidence="1">
        <name>Zn(2+)</name>
        <dbReference type="ChEBI" id="CHEBI:29105"/>
    </cofactor>
    <text evidence="1">Binds 1 zinc ion per subunit.</text>
</comment>
<comment type="pathway">
    <text evidence="1">tRNA modification; tRNA-queuosine biosynthesis.</text>
</comment>
<comment type="subunit">
    <text evidence="1">Homodimer. Within each dimer, one monomer is responsible for RNA recognition and catalysis, while the other monomer binds to the replacement base PreQ1.</text>
</comment>
<comment type="similarity">
    <text evidence="1">Belongs to the queuine tRNA-ribosyltransferase family.</text>
</comment>
<feature type="chain" id="PRO_1000016808" description="Queuine tRNA-ribosyltransferase">
    <location>
        <begin position="1"/>
        <end position="382"/>
    </location>
</feature>
<feature type="region of interest" description="RNA binding" evidence="1">
    <location>
        <begin position="252"/>
        <end position="258"/>
    </location>
</feature>
<feature type="region of interest" description="RNA binding; important for wobble base 34 recognition" evidence="1">
    <location>
        <begin position="276"/>
        <end position="280"/>
    </location>
</feature>
<feature type="active site" description="Proton acceptor" evidence="1">
    <location>
        <position position="96"/>
    </location>
</feature>
<feature type="active site" description="Nucleophile" evidence="1">
    <location>
        <position position="271"/>
    </location>
</feature>
<feature type="binding site" evidence="1">
    <location>
        <begin position="96"/>
        <end position="100"/>
    </location>
    <ligand>
        <name>substrate</name>
    </ligand>
</feature>
<feature type="binding site" evidence="1">
    <location>
        <position position="151"/>
    </location>
    <ligand>
        <name>substrate</name>
    </ligand>
</feature>
<feature type="binding site" evidence="1">
    <location>
        <position position="194"/>
    </location>
    <ligand>
        <name>substrate</name>
    </ligand>
</feature>
<feature type="binding site" evidence="1">
    <location>
        <position position="221"/>
    </location>
    <ligand>
        <name>substrate</name>
    </ligand>
</feature>
<feature type="binding site" evidence="1">
    <location>
        <position position="309"/>
    </location>
    <ligand>
        <name>Zn(2+)</name>
        <dbReference type="ChEBI" id="CHEBI:29105"/>
    </ligand>
</feature>
<feature type="binding site" evidence="1">
    <location>
        <position position="311"/>
    </location>
    <ligand>
        <name>Zn(2+)</name>
        <dbReference type="ChEBI" id="CHEBI:29105"/>
    </ligand>
</feature>
<feature type="binding site" evidence="1">
    <location>
        <position position="314"/>
    </location>
    <ligand>
        <name>Zn(2+)</name>
        <dbReference type="ChEBI" id="CHEBI:29105"/>
    </ligand>
</feature>
<feature type="binding site" evidence="1">
    <location>
        <position position="340"/>
    </location>
    <ligand>
        <name>Zn(2+)</name>
        <dbReference type="ChEBI" id="CHEBI:29105"/>
    </ligand>
</feature>
<proteinExistence type="inferred from homology"/>
<accession>A2RHN5</accession>
<dbReference type="EC" id="2.4.2.29" evidence="1"/>
<dbReference type="EMBL" id="AM406671">
    <property type="protein sequence ID" value="CAL96771.1"/>
    <property type="molecule type" value="Genomic_DNA"/>
</dbReference>
<dbReference type="RefSeq" id="WP_011834256.1">
    <property type="nucleotide sequence ID" value="NC_009004.1"/>
</dbReference>
<dbReference type="SMR" id="A2RHN5"/>
<dbReference type="STRING" id="416870.llmg_0164"/>
<dbReference type="KEGG" id="llm:llmg_0164"/>
<dbReference type="eggNOG" id="COG0343">
    <property type="taxonomic scope" value="Bacteria"/>
</dbReference>
<dbReference type="HOGENOM" id="CLU_022060_0_1_9"/>
<dbReference type="OrthoDB" id="9805417at2"/>
<dbReference type="PhylomeDB" id="A2RHN5"/>
<dbReference type="UniPathway" id="UPA00392"/>
<dbReference type="Proteomes" id="UP000000364">
    <property type="component" value="Chromosome"/>
</dbReference>
<dbReference type="GO" id="GO:0005829">
    <property type="term" value="C:cytosol"/>
    <property type="evidence" value="ECO:0007669"/>
    <property type="project" value="TreeGrafter"/>
</dbReference>
<dbReference type="GO" id="GO:0046872">
    <property type="term" value="F:metal ion binding"/>
    <property type="evidence" value="ECO:0007669"/>
    <property type="project" value="UniProtKB-KW"/>
</dbReference>
<dbReference type="GO" id="GO:0008479">
    <property type="term" value="F:tRNA-guanosine(34) queuine transglycosylase activity"/>
    <property type="evidence" value="ECO:0007669"/>
    <property type="project" value="UniProtKB-UniRule"/>
</dbReference>
<dbReference type="GO" id="GO:0008616">
    <property type="term" value="P:queuosine biosynthetic process"/>
    <property type="evidence" value="ECO:0007669"/>
    <property type="project" value="UniProtKB-UniRule"/>
</dbReference>
<dbReference type="GO" id="GO:0002099">
    <property type="term" value="P:tRNA wobble guanine modification"/>
    <property type="evidence" value="ECO:0007669"/>
    <property type="project" value="TreeGrafter"/>
</dbReference>
<dbReference type="GO" id="GO:0101030">
    <property type="term" value="P:tRNA-guanine transglycosylation"/>
    <property type="evidence" value="ECO:0007669"/>
    <property type="project" value="InterPro"/>
</dbReference>
<dbReference type="FunFam" id="3.20.20.105:FF:000001">
    <property type="entry name" value="Queuine tRNA-ribosyltransferase"/>
    <property type="match status" value="1"/>
</dbReference>
<dbReference type="Gene3D" id="3.20.20.105">
    <property type="entry name" value="Queuine tRNA-ribosyltransferase-like"/>
    <property type="match status" value="1"/>
</dbReference>
<dbReference type="HAMAP" id="MF_00168">
    <property type="entry name" value="Q_tRNA_Tgt"/>
    <property type="match status" value="1"/>
</dbReference>
<dbReference type="InterPro" id="IPR050076">
    <property type="entry name" value="ArchSynthase1/Queuine_TRR"/>
</dbReference>
<dbReference type="InterPro" id="IPR004803">
    <property type="entry name" value="TGT"/>
</dbReference>
<dbReference type="InterPro" id="IPR036511">
    <property type="entry name" value="TGT-like_sf"/>
</dbReference>
<dbReference type="InterPro" id="IPR002616">
    <property type="entry name" value="tRNA_ribo_trans-like"/>
</dbReference>
<dbReference type="NCBIfam" id="TIGR00430">
    <property type="entry name" value="Q_tRNA_tgt"/>
    <property type="match status" value="1"/>
</dbReference>
<dbReference type="NCBIfam" id="TIGR00449">
    <property type="entry name" value="tgt_general"/>
    <property type="match status" value="1"/>
</dbReference>
<dbReference type="PANTHER" id="PTHR46499">
    <property type="entry name" value="QUEUINE TRNA-RIBOSYLTRANSFERASE"/>
    <property type="match status" value="1"/>
</dbReference>
<dbReference type="PANTHER" id="PTHR46499:SF1">
    <property type="entry name" value="QUEUINE TRNA-RIBOSYLTRANSFERASE"/>
    <property type="match status" value="1"/>
</dbReference>
<dbReference type="Pfam" id="PF01702">
    <property type="entry name" value="TGT"/>
    <property type="match status" value="1"/>
</dbReference>
<dbReference type="SUPFAM" id="SSF51713">
    <property type="entry name" value="tRNA-guanine transglycosylase"/>
    <property type="match status" value="1"/>
</dbReference>
<keyword id="KW-0328">Glycosyltransferase</keyword>
<keyword id="KW-0479">Metal-binding</keyword>
<keyword id="KW-0671">Queuosine biosynthesis</keyword>
<keyword id="KW-0808">Transferase</keyword>
<keyword id="KW-0819">tRNA processing</keyword>
<keyword id="KW-0862">Zinc</keyword>
<evidence type="ECO:0000255" key="1">
    <source>
        <dbReference type="HAMAP-Rule" id="MF_00168"/>
    </source>
</evidence>